<protein>
    <recommendedName>
        <fullName evidence="1">tRNA modification GTPase MnmE</fullName>
        <ecNumber evidence="1">3.6.-.-</ecNumber>
    </recommendedName>
</protein>
<name>MNME_STAA8</name>
<comment type="function">
    <text evidence="1">Exhibits a very high intrinsic GTPase hydrolysis rate. Involved in the addition of a carboxymethylaminomethyl (cmnm) group at the wobble position (U34) of certain tRNAs, forming tRNA-cmnm(5)s(2)U34.</text>
</comment>
<comment type="cofactor">
    <cofactor evidence="1">
        <name>K(+)</name>
        <dbReference type="ChEBI" id="CHEBI:29103"/>
    </cofactor>
    <text evidence="1">Binds 1 potassium ion per subunit.</text>
</comment>
<comment type="subunit">
    <text evidence="1">Homodimer. Heterotetramer of two MnmE and two MnmG subunits.</text>
</comment>
<comment type="subcellular location">
    <subcellularLocation>
        <location evidence="1">Cytoplasm</location>
    </subcellularLocation>
</comment>
<comment type="similarity">
    <text evidence="1">Belongs to the TRAFAC class TrmE-Era-EngA-EngB-Septin-like GTPase superfamily. TrmE GTPase family.</text>
</comment>
<accession>Q2FUQ2</accession>
<organism>
    <name type="scientific">Staphylococcus aureus (strain NCTC 8325 / PS 47)</name>
    <dbReference type="NCBI Taxonomy" id="93061"/>
    <lineage>
        <taxon>Bacteria</taxon>
        <taxon>Bacillati</taxon>
        <taxon>Bacillota</taxon>
        <taxon>Bacilli</taxon>
        <taxon>Bacillales</taxon>
        <taxon>Staphylococcaceae</taxon>
        <taxon>Staphylococcus</taxon>
    </lineage>
</organism>
<feature type="chain" id="PRO_1000048883" description="tRNA modification GTPase MnmE">
    <location>
        <begin position="1"/>
        <end position="459"/>
    </location>
</feature>
<feature type="domain" description="TrmE-type G">
    <location>
        <begin position="221"/>
        <end position="380"/>
    </location>
</feature>
<feature type="binding site" evidence="1">
    <location>
        <position position="22"/>
    </location>
    <ligand>
        <name>(6S)-5-formyl-5,6,7,8-tetrahydrofolate</name>
        <dbReference type="ChEBI" id="CHEBI:57457"/>
    </ligand>
</feature>
<feature type="binding site" evidence="1">
    <location>
        <position position="85"/>
    </location>
    <ligand>
        <name>(6S)-5-formyl-5,6,7,8-tetrahydrofolate</name>
        <dbReference type="ChEBI" id="CHEBI:57457"/>
    </ligand>
</feature>
<feature type="binding site" evidence="1">
    <location>
        <position position="124"/>
    </location>
    <ligand>
        <name>(6S)-5-formyl-5,6,7,8-tetrahydrofolate</name>
        <dbReference type="ChEBI" id="CHEBI:57457"/>
    </ligand>
</feature>
<feature type="binding site" evidence="1">
    <location>
        <begin position="231"/>
        <end position="236"/>
    </location>
    <ligand>
        <name>GTP</name>
        <dbReference type="ChEBI" id="CHEBI:37565"/>
    </ligand>
</feature>
<feature type="binding site" evidence="1">
    <location>
        <position position="231"/>
    </location>
    <ligand>
        <name>K(+)</name>
        <dbReference type="ChEBI" id="CHEBI:29103"/>
    </ligand>
</feature>
<feature type="binding site" evidence="1">
    <location>
        <position position="235"/>
    </location>
    <ligand>
        <name>Mg(2+)</name>
        <dbReference type="ChEBI" id="CHEBI:18420"/>
    </ligand>
</feature>
<feature type="binding site" evidence="1">
    <location>
        <begin position="250"/>
        <end position="256"/>
    </location>
    <ligand>
        <name>GTP</name>
        <dbReference type="ChEBI" id="CHEBI:37565"/>
    </ligand>
</feature>
<feature type="binding site" evidence="1">
    <location>
        <position position="250"/>
    </location>
    <ligand>
        <name>K(+)</name>
        <dbReference type="ChEBI" id="CHEBI:29103"/>
    </ligand>
</feature>
<feature type="binding site" evidence="1">
    <location>
        <position position="252"/>
    </location>
    <ligand>
        <name>K(+)</name>
        <dbReference type="ChEBI" id="CHEBI:29103"/>
    </ligand>
</feature>
<feature type="binding site" evidence="1">
    <location>
        <position position="255"/>
    </location>
    <ligand>
        <name>K(+)</name>
        <dbReference type="ChEBI" id="CHEBI:29103"/>
    </ligand>
</feature>
<feature type="binding site" evidence="1">
    <location>
        <position position="256"/>
    </location>
    <ligand>
        <name>Mg(2+)</name>
        <dbReference type="ChEBI" id="CHEBI:18420"/>
    </ligand>
</feature>
<feature type="binding site" evidence="1">
    <location>
        <begin position="275"/>
        <end position="278"/>
    </location>
    <ligand>
        <name>GTP</name>
        <dbReference type="ChEBI" id="CHEBI:37565"/>
    </ligand>
</feature>
<feature type="binding site" evidence="1">
    <location>
        <position position="459"/>
    </location>
    <ligand>
        <name>(6S)-5-formyl-5,6,7,8-tetrahydrofolate</name>
        <dbReference type="ChEBI" id="CHEBI:57457"/>
    </ligand>
</feature>
<dbReference type="EC" id="3.6.-.-" evidence="1"/>
<dbReference type="EMBL" id="CP000253">
    <property type="protein sequence ID" value="ABD32035.1"/>
    <property type="molecule type" value="Genomic_DNA"/>
</dbReference>
<dbReference type="RefSeq" id="WP_000362509.1">
    <property type="nucleotide sequence ID" value="NZ_LS483365.1"/>
</dbReference>
<dbReference type="RefSeq" id="YP_501498.1">
    <property type="nucleotide sequence ID" value="NC_007795.1"/>
</dbReference>
<dbReference type="SMR" id="Q2FUQ2"/>
<dbReference type="STRING" id="93061.SAOUHSC_03053"/>
<dbReference type="PaxDb" id="1280-SAXN108_2990"/>
<dbReference type="GeneID" id="3921316"/>
<dbReference type="KEGG" id="sao:SAOUHSC_03053"/>
<dbReference type="PATRIC" id="fig|93061.5.peg.2758"/>
<dbReference type="eggNOG" id="COG0486">
    <property type="taxonomic scope" value="Bacteria"/>
</dbReference>
<dbReference type="HOGENOM" id="CLU_019624_4_1_9"/>
<dbReference type="OrthoDB" id="9805918at2"/>
<dbReference type="PRO" id="PR:Q2FUQ2"/>
<dbReference type="Proteomes" id="UP000008816">
    <property type="component" value="Chromosome"/>
</dbReference>
<dbReference type="GO" id="GO:0005737">
    <property type="term" value="C:cytoplasm"/>
    <property type="evidence" value="ECO:0000318"/>
    <property type="project" value="GO_Central"/>
</dbReference>
<dbReference type="GO" id="GO:0005829">
    <property type="term" value="C:cytosol"/>
    <property type="evidence" value="ECO:0000318"/>
    <property type="project" value="GO_Central"/>
</dbReference>
<dbReference type="GO" id="GO:0005525">
    <property type="term" value="F:GTP binding"/>
    <property type="evidence" value="ECO:0007669"/>
    <property type="project" value="UniProtKB-UniRule"/>
</dbReference>
<dbReference type="GO" id="GO:0003924">
    <property type="term" value="F:GTPase activity"/>
    <property type="evidence" value="ECO:0007669"/>
    <property type="project" value="UniProtKB-UniRule"/>
</dbReference>
<dbReference type="GO" id="GO:0046872">
    <property type="term" value="F:metal ion binding"/>
    <property type="evidence" value="ECO:0007669"/>
    <property type="project" value="UniProtKB-KW"/>
</dbReference>
<dbReference type="GO" id="GO:0030488">
    <property type="term" value="P:tRNA methylation"/>
    <property type="evidence" value="ECO:0000318"/>
    <property type="project" value="GO_Central"/>
</dbReference>
<dbReference type="GO" id="GO:0002098">
    <property type="term" value="P:tRNA wobble uridine modification"/>
    <property type="evidence" value="ECO:0000318"/>
    <property type="project" value="GO_Central"/>
</dbReference>
<dbReference type="CDD" id="cd04164">
    <property type="entry name" value="trmE"/>
    <property type="match status" value="1"/>
</dbReference>
<dbReference type="CDD" id="cd14858">
    <property type="entry name" value="TrmE_N"/>
    <property type="match status" value="1"/>
</dbReference>
<dbReference type="FunFam" id="3.30.1360.120:FF:000003">
    <property type="entry name" value="tRNA modification GTPase MnmE"/>
    <property type="match status" value="1"/>
</dbReference>
<dbReference type="FunFam" id="3.40.50.300:FF:000494">
    <property type="entry name" value="tRNA modification GTPase MnmE"/>
    <property type="match status" value="1"/>
</dbReference>
<dbReference type="Gene3D" id="3.40.50.300">
    <property type="entry name" value="P-loop containing nucleotide triphosphate hydrolases"/>
    <property type="match status" value="1"/>
</dbReference>
<dbReference type="Gene3D" id="3.30.1360.120">
    <property type="entry name" value="Probable tRNA modification gtpase trme, domain 1"/>
    <property type="match status" value="1"/>
</dbReference>
<dbReference type="Gene3D" id="1.20.120.430">
    <property type="entry name" value="tRNA modification GTPase MnmE domain 2"/>
    <property type="match status" value="1"/>
</dbReference>
<dbReference type="HAMAP" id="MF_00379">
    <property type="entry name" value="GTPase_MnmE"/>
    <property type="match status" value="1"/>
</dbReference>
<dbReference type="InterPro" id="IPR031168">
    <property type="entry name" value="G_TrmE"/>
</dbReference>
<dbReference type="InterPro" id="IPR006073">
    <property type="entry name" value="GTP-bd"/>
</dbReference>
<dbReference type="InterPro" id="IPR018948">
    <property type="entry name" value="GTP-bd_TrmE_N"/>
</dbReference>
<dbReference type="InterPro" id="IPR004520">
    <property type="entry name" value="GTPase_MnmE"/>
</dbReference>
<dbReference type="InterPro" id="IPR027368">
    <property type="entry name" value="MnmE_dom2"/>
</dbReference>
<dbReference type="InterPro" id="IPR025867">
    <property type="entry name" value="MnmE_helical"/>
</dbReference>
<dbReference type="InterPro" id="IPR027417">
    <property type="entry name" value="P-loop_NTPase"/>
</dbReference>
<dbReference type="InterPro" id="IPR005225">
    <property type="entry name" value="Small_GTP-bd"/>
</dbReference>
<dbReference type="InterPro" id="IPR027266">
    <property type="entry name" value="TrmE/GcvT_dom1"/>
</dbReference>
<dbReference type="NCBIfam" id="TIGR00450">
    <property type="entry name" value="mnmE_trmE_thdF"/>
    <property type="match status" value="1"/>
</dbReference>
<dbReference type="NCBIfam" id="NF003661">
    <property type="entry name" value="PRK05291.1-3"/>
    <property type="match status" value="1"/>
</dbReference>
<dbReference type="NCBIfam" id="TIGR00231">
    <property type="entry name" value="small_GTP"/>
    <property type="match status" value="1"/>
</dbReference>
<dbReference type="PANTHER" id="PTHR42714">
    <property type="entry name" value="TRNA MODIFICATION GTPASE GTPBP3"/>
    <property type="match status" value="1"/>
</dbReference>
<dbReference type="PANTHER" id="PTHR42714:SF2">
    <property type="entry name" value="TRNA MODIFICATION GTPASE GTPBP3, MITOCHONDRIAL"/>
    <property type="match status" value="1"/>
</dbReference>
<dbReference type="Pfam" id="PF01926">
    <property type="entry name" value="MMR_HSR1"/>
    <property type="match status" value="1"/>
</dbReference>
<dbReference type="Pfam" id="PF12631">
    <property type="entry name" value="MnmE_helical"/>
    <property type="match status" value="1"/>
</dbReference>
<dbReference type="Pfam" id="PF10396">
    <property type="entry name" value="TrmE_N"/>
    <property type="match status" value="1"/>
</dbReference>
<dbReference type="PRINTS" id="PR00449">
    <property type="entry name" value="RASTRNSFRMNG"/>
</dbReference>
<dbReference type="SUPFAM" id="SSF52540">
    <property type="entry name" value="P-loop containing nucleoside triphosphate hydrolases"/>
    <property type="match status" value="1"/>
</dbReference>
<dbReference type="SUPFAM" id="SSF116878">
    <property type="entry name" value="TrmE connector domain"/>
    <property type="match status" value="1"/>
</dbReference>
<dbReference type="PROSITE" id="PS51709">
    <property type="entry name" value="G_TRME"/>
    <property type="match status" value="1"/>
</dbReference>
<reference key="1">
    <citation type="book" date="2006" name="Gram positive pathogens, 2nd edition">
        <title>The Staphylococcus aureus NCTC 8325 genome.</title>
        <editorList>
            <person name="Fischetti V."/>
            <person name="Novick R."/>
            <person name="Ferretti J."/>
            <person name="Portnoy D."/>
            <person name="Rood J."/>
        </editorList>
        <authorList>
            <person name="Gillaspy A.F."/>
            <person name="Worrell V."/>
            <person name="Orvis J."/>
            <person name="Roe B.A."/>
            <person name="Dyer D.W."/>
            <person name="Iandolo J.J."/>
        </authorList>
    </citation>
    <scope>NUCLEOTIDE SEQUENCE [LARGE SCALE GENOMIC DNA]</scope>
    <source>
        <strain>NCTC 8325 / PS 47</strain>
    </source>
</reference>
<gene>
    <name evidence="1" type="primary">mnmE</name>
    <name evidence="1" type="synonym">trmE</name>
    <name type="ordered locus">SAOUHSC_03053</name>
</gene>
<proteinExistence type="inferred from homology"/>
<evidence type="ECO:0000255" key="1">
    <source>
        <dbReference type="HAMAP-Rule" id="MF_00379"/>
    </source>
</evidence>
<keyword id="KW-0963">Cytoplasm</keyword>
<keyword id="KW-0342">GTP-binding</keyword>
<keyword id="KW-0378">Hydrolase</keyword>
<keyword id="KW-0460">Magnesium</keyword>
<keyword id="KW-0479">Metal-binding</keyword>
<keyword id="KW-0547">Nucleotide-binding</keyword>
<keyword id="KW-0630">Potassium</keyword>
<keyword id="KW-1185">Reference proteome</keyword>
<keyword id="KW-0819">tRNA processing</keyword>
<sequence length="459" mass="51341">MDLDTITSISTPMGEGAIGIVRLSGPQAVEIADKLYKGKHLLNDVPSHTINYGHIIDPESKEVVEEVMVSVLRAPKTFTREDIIEINCHGGILTINRVLELTMTYGARMAEPGEFTKRAFLNGRIDLSQAEAVMDFIRSKTDRASKVAMNQIEGRLSDLIKKQRQSILEILAQVEVNIDYPEYDDVEDATTEFLLEQSKEIKQEINRLLDTGAQGKIMREGLSTVIVGKPNVGKSSMLNNLIQDNKAIVTEVAGTTRDVLEEYVNVRGVPLRLVDTAGIRETEDIVEKIGVERSRKALSQADLILFVLNNNEALTQEDYTLYEVVKNEDVIVIVNKMDLEQNIDINEVKDMIGDTPLIQTSMLKQEGIDELEIQIRDLFFGGEVQNQDMTYVSNSRHISLLKQARQTIQDAIDAAESGVPMDMVQIDLTRTWEILGEIIGETASDELIDQLFSQFCLGK</sequence>